<dbReference type="EC" id="1.17.1.8" evidence="1"/>
<dbReference type="EMBL" id="CP000526">
    <property type="protein sequence ID" value="ABM50280.1"/>
    <property type="molecule type" value="Genomic_DNA"/>
</dbReference>
<dbReference type="SMR" id="A1V0H0"/>
<dbReference type="KEGG" id="bmv:BMASAVP1_A0373"/>
<dbReference type="HOGENOM" id="CLU_047479_2_1_4"/>
<dbReference type="UniPathway" id="UPA00034">
    <property type="reaction ID" value="UER00018"/>
</dbReference>
<dbReference type="GO" id="GO:0005829">
    <property type="term" value="C:cytosol"/>
    <property type="evidence" value="ECO:0007669"/>
    <property type="project" value="TreeGrafter"/>
</dbReference>
<dbReference type="GO" id="GO:0008839">
    <property type="term" value="F:4-hydroxy-tetrahydrodipicolinate reductase"/>
    <property type="evidence" value="ECO:0007669"/>
    <property type="project" value="UniProtKB-EC"/>
</dbReference>
<dbReference type="GO" id="GO:0051287">
    <property type="term" value="F:NAD binding"/>
    <property type="evidence" value="ECO:0007669"/>
    <property type="project" value="UniProtKB-UniRule"/>
</dbReference>
<dbReference type="GO" id="GO:0050661">
    <property type="term" value="F:NADP binding"/>
    <property type="evidence" value="ECO:0007669"/>
    <property type="project" value="UniProtKB-UniRule"/>
</dbReference>
<dbReference type="GO" id="GO:0016726">
    <property type="term" value="F:oxidoreductase activity, acting on CH or CH2 groups, NAD or NADP as acceptor"/>
    <property type="evidence" value="ECO:0007669"/>
    <property type="project" value="UniProtKB-UniRule"/>
</dbReference>
<dbReference type="GO" id="GO:0019877">
    <property type="term" value="P:diaminopimelate biosynthetic process"/>
    <property type="evidence" value="ECO:0007669"/>
    <property type="project" value="UniProtKB-UniRule"/>
</dbReference>
<dbReference type="GO" id="GO:0009089">
    <property type="term" value="P:lysine biosynthetic process via diaminopimelate"/>
    <property type="evidence" value="ECO:0007669"/>
    <property type="project" value="UniProtKB-UniRule"/>
</dbReference>
<dbReference type="CDD" id="cd02274">
    <property type="entry name" value="DHDPR_N"/>
    <property type="match status" value="1"/>
</dbReference>
<dbReference type="FunFam" id="3.30.360.10:FF:000004">
    <property type="entry name" value="4-hydroxy-tetrahydrodipicolinate reductase"/>
    <property type="match status" value="1"/>
</dbReference>
<dbReference type="FunFam" id="3.40.50.720:FF:000048">
    <property type="entry name" value="4-hydroxy-tetrahydrodipicolinate reductase"/>
    <property type="match status" value="1"/>
</dbReference>
<dbReference type="Gene3D" id="3.30.360.10">
    <property type="entry name" value="Dihydrodipicolinate Reductase, domain 2"/>
    <property type="match status" value="1"/>
</dbReference>
<dbReference type="Gene3D" id="3.40.50.720">
    <property type="entry name" value="NAD(P)-binding Rossmann-like Domain"/>
    <property type="match status" value="1"/>
</dbReference>
<dbReference type="HAMAP" id="MF_00102">
    <property type="entry name" value="DapB"/>
    <property type="match status" value="1"/>
</dbReference>
<dbReference type="InterPro" id="IPR022663">
    <property type="entry name" value="DapB_C"/>
</dbReference>
<dbReference type="InterPro" id="IPR000846">
    <property type="entry name" value="DapB_N"/>
</dbReference>
<dbReference type="InterPro" id="IPR022664">
    <property type="entry name" value="DapB_N_CS"/>
</dbReference>
<dbReference type="InterPro" id="IPR023940">
    <property type="entry name" value="DHDPR_bac"/>
</dbReference>
<dbReference type="InterPro" id="IPR036291">
    <property type="entry name" value="NAD(P)-bd_dom_sf"/>
</dbReference>
<dbReference type="NCBIfam" id="TIGR00036">
    <property type="entry name" value="dapB"/>
    <property type="match status" value="1"/>
</dbReference>
<dbReference type="PANTHER" id="PTHR20836:SF0">
    <property type="entry name" value="4-HYDROXY-TETRAHYDRODIPICOLINATE REDUCTASE 1, CHLOROPLASTIC-RELATED"/>
    <property type="match status" value="1"/>
</dbReference>
<dbReference type="PANTHER" id="PTHR20836">
    <property type="entry name" value="DIHYDRODIPICOLINATE REDUCTASE"/>
    <property type="match status" value="1"/>
</dbReference>
<dbReference type="Pfam" id="PF05173">
    <property type="entry name" value="DapB_C"/>
    <property type="match status" value="1"/>
</dbReference>
<dbReference type="Pfam" id="PF01113">
    <property type="entry name" value="DapB_N"/>
    <property type="match status" value="1"/>
</dbReference>
<dbReference type="PIRSF" id="PIRSF000161">
    <property type="entry name" value="DHPR"/>
    <property type="match status" value="1"/>
</dbReference>
<dbReference type="SUPFAM" id="SSF55347">
    <property type="entry name" value="Glyceraldehyde-3-phosphate dehydrogenase-like, C-terminal domain"/>
    <property type="match status" value="1"/>
</dbReference>
<dbReference type="SUPFAM" id="SSF51735">
    <property type="entry name" value="NAD(P)-binding Rossmann-fold domains"/>
    <property type="match status" value="1"/>
</dbReference>
<dbReference type="PROSITE" id="PS01298">
    <property type="entry name" value="DAPB"/>
    <property type="match status" value="1"/>
</dbReference>
<feature type="chain" id="PRO_1000008544" description="4-hydroxy-tetrahydrodipicolinate reductase">
    <location>
        <begin position="1"/>
        <end position="268"/>
    </location>
</feature>
<feature type="active site" description="Proton donor/acceptor" evidence="1">
    <location>
        <position position="156"/>
    </location>
</feature>
<feature type="active site" description="Proton donor" evidence="1">
    <location>
        <position position="160"/>
    </location>
</feature>
<feature type="binding site" evidence="1">
    <location>
        <begin position="10"/>
        <end position="15"/>
    </location>
    <ligand>
        <name>NAD(+)</name>
        <dbReference type="ChEBI" id="CHEBI:57540"/>
    </ligand>
</feature>
<feature type="binding site" evidence="1">
    <location>
        <position position="36"/>
    </location>
    <ligand>
        <name>NAD(+)</name>
        <dbReference type="ChEBI" id="CHEBI:57540"/>
    </ligand>
</feature>
<feature type="binding site" evidence="1">
    <location>
        <position position="37"/>
    </location>
    <ligand>
        <name>NADP(+)</name>
        <dbReference type="ChEBI" id="CHEBI:58349"/>
    </ligand>
</feature>
<feature type="binding site" evidence="1">
    <location>
        <begin position="99"/>
        <end position="101"/>
    </location>
    <ligand>
        <name>NAD(+)</name>
        <dbReference type="ChEBI" id="CHEBI:57540"/>
    </ligand>
</feature>
<feature type="binding site" evidence="1">
    <location>
        <begin position="123"/>
        <end position="126"/>
    </location>
    <ligand>
        <name>NAD(+)</name>
        <dbReference type="ChEBI" id="CHEBI:57540"/>
    </ligand>
</feature>
<feature type="binding site" evidence="1">
    <location>
        <position position="157"/>
    </location>
    <ligand>
        <name>(S)-2,3,4,5-tetrahydrodipicolinate</name>
        <dbReference type="ChEBI" id="CHEBI:16845"/>
    </ligand>
</feature>
<feature type="binding site" evidence="1">
    <location>
        <begin position="166"/>
        <end position="167"/>
    </location>
    <ligand>
        <name>(S)-2,3,4,5-tetrahydrodipicolinate</name>
        <dbReference type="ChEBI" id="CHEBI:16845"/>
    </ligand>
</feature>
<name>DAPB_BURMS</name>
<keyword id="KW-0028">Amino-acid biosynthesis</keyword>
<keyword id="KW-0963">Cytoplasm</keyword>
<keyword id="KW-0220">Diaminopimelate biosynthesis</keyword>
<keyword id="KW-0457">Lysine biosynthesis</keyword>
<keyword id="KW-0520">NAD</keyword>
<keyword id="KW-0521">NADP</keyword>
<keyword id="KW-0560">Oxidoreductase</keyword>
<organism>
    <name type="scientific">Burkholderia mallei (strain SAVP1)</name>
    <dbReference type="NCBI Taxonomy" id="320388"/>
    <lineage>
        <taxon>Bacteria</taxon>
        <taxon>Pseudomonadati</taxon>
        <taxon>Pseudomonadota</taxon>
        <taxon>Betaproteobacteria</taxon>
        <taxon>Burkholderiales</taxon>
        <taxon>Burkholderiaceae</taxon>
        <taxon>Burkholderia</taxon>
        <taxon>pseudomallei group</taxon>
    </lineage>
</organism>
<gene>
    <name evidence="1" type="primary">dapB</name>
    <name type="ordered locus">BMASAVP1_A0373</name>
</gene>
<protein>
    <recommendedName>
        <fullName evidence="1">4-hydroxy-tetrahydrodipicolinate reductase</fullName>
        <shortName evidence="1">HTPA reductase</shortName>
        <ecNumber evidence="1">1.17.1.8</ecNumber>
    </recommendedName>
</protein>
<accession>A1V0H0</accession>
<evidence type="ECO:0000255" key="1">
    <source>
        <dbReference type="HAMAP-Rule" id="MF_00102"/>
    </source>
</evidence>
<evidence type="ECO:0000305" key="2"/>
<comment type="function">
    <text evidence="1">Catalyzes the conversion of 4-hydroxy-tetrahydrodipicolinate (HTPA) to tetrahydrodipicolinate.</text>
</comment>
<comment type="catalytic activity">
    <reaction evidence="1">
        <text>(S)-2,3,4,5-tetrahydrodipicolinate + NAD(+) + H2O = (2S,4S)-4-hydroxy-2,3,4,5-tetrahydrodipicolinate + NADH + H(+)</text>
        <dbReference type="Rhea" id="RHEA:35323"/>
        <dbReference type="ChEBI" id="CHEBI:15377"/>
        <dbReference type="ChEBI" id="CHEBI:15378"/>
        <dbReference type="ChEBI" id="CHEBI:16845"/>
        <dbReference type="ChEBI" id="CHEBI:57540"/>
        <dbReference type="ChEBI" id="CHEBI:57945"/>
        <dbReference type="ChEBI" id="CHEBI:67139"/>
        <dbReference type="EC" id="1.17.1.8"/>
    </reaction>
</comment>
<comment type="catalytic activity">
    <reaction evidence="1">
        <text>(S)-2,3,4,5-tetrahydrodipicolinate + NADP(+) + H2O = (2S,4S)-4-hydroxy-2,3,4,5-tetrahydrodipicolinate + NADPH + H(+)</text>
        <dbReference type="Rhea" id="RHEA:35331"/>
        <dbReference type="ChEBI" id="CHEBI:15377"/>
        <dbReference type="ChEBI" id="CHEBI:15378"/>
        <dbReference type="ChEBI" id="CHEBI:16845"/>
        <dbReference type="ChEBI" id="CHEBI:57783"/>
        <dbReference type="ChEBI" id="CHEBI:58349"/>
        <dbReference type="ChEBI" id="CHEBI:67139"/>
        <dbReference type="EC" id="1.17.1.8"/>
    </reaction>
</comment>
<comment type="pathway">
    <text evidence="1">Amino-acid biosynthesis; L-lysine biosynthesis via DAP pathway; (S)-tetrahydrodipicolinate from L-aspartate: step 4/4.</text>
</comment>
<comment type="subcellular location">
    <subcellularLocation>
        <location evidence="1">Cytoplasm</location>
    </subcellularLocation>
</comment>
<comment type="similarity">
    <text evidence="1">Belongs to the DapB family.</text>
</comment>
<comment type="caution">
    <text evidence="2">Was originally thought to be a dihydrodipicolinate reductase (DHDPR), catalyzing the conversion of dihydrodipicolinate to tetrahydrodipicolinate. However, it was shown in E.coli that the substrate of the enzymatic reaction is not dihydrodipicolinate (DHDP) but in fact (2S,4S)-4-hydroxy-2,3,4,5-tetrahydrodipicolinic acid (HTPA), the product released by the DapA-catalyzed reaction.</text>
</comment>
<proteinExistence type="inferred from homology"/>
<sequence length="268" mass="28126">MSSMKIAIAGASGRMGRMLIEAVLAAPDATLAGALDRTGSSQLGQDAGAFLGKQTGVALTDDIERVCAEADYLIDFTRPEGTLAHLDAALRHDVKLVIGTTGFSEPQKAQLRAAGGKIALVFSANMSVGVNVTMKLLEFAAKQFAQGYDIEIIEAHHRHKVDAPSGTALMMGETIAAATGRTLDDCAVYGRHGVTGERDPSTIGFSAIRGGDIVGDHTVLFAGIGERIEITHKSASRVSYAQGALRAARFLAGHQAGFFDMQDVLGLR</sequence>
<reference key="1">
    <citation type="journal article" date="2010" name="Genome Biol. Evol.">
        <title>Continuing evolution of Burkholderia mallei through genome reduction and large-scale rearrangements.</title>
        <authorList>
            <person name="Losada L."/>
            <person name="Ronning C.M."/>
            <person name="DeShazer D."/>
            <person name="Woods D."/>
            <person name="Fedorova N."/>
            <person name="Kim H.S."/>
            <person name="Shabalina S.A."/>
            <person name="Pearson T.R."/>
            <person name="Brinkac L."/>
            <person name="Tan P."/>
            <person name="Nandi T."/>
            <person name="Crabtree J."/>
            <person name="Badger J."/>
            <person name="Beckstrom-Sternberg S."/>
            <person name="Saqib M."/>
            <person name="Schutzer S.E."/>
            <person name="Keim P."/>
            <person name="Nierman W.C."/>
        </authorList>
    </citation>
    <scope>NUCLEOTIDE SEQUENCE [LARGE SCALE GENOMIC DNA]</scope>
    <source>
        <strain>SAVP1</strain>
    </source>
</reference>